<proteinExistence type="inferred from homology"/>
<name>ENGB_HYPNA</name>
<accession>Q0C548</accession>
<feature type="chain" id="PRO_0000266876" description="Probable GTP-binding protein EngB">
    <location>
        <begin position="1"/>
        <end position="220"/>
    </location>
</feature>
<feature type="domain" description="EngB-type G" evidence="1">
    <location>
        <begin position="41"/>
        <end position="219"/>
    </location>
</feature>
<feature type="binding site" evidence="1">
    <location>
        <begin position="49"/>
        <end position="56"/>
    </location>
    <ligand>
        <name>GTP</name>
        <dbReference type="ChEBI" id="CHEBI:37565"/>
    </ligand>
</feature>
<feature type="binding site" evidence="1">
    <location>
        <position position="56"/>
    </location>
    <ligand>
        <name>Mg(2+)</name>
        <dbReference type="ChEBI" id="CHEBI:18420"/>
    </ligand>
</feature>
<feature type="binding site" evidence="1">
    <location>
        <begin position="76"/>
        <end position="80"/>
    </location>
    <ligand>
        <name>GTP</name>
        <dbReference type="ChEBI" id="CHEBI:37565"/>
    </ligand>
</feature>
<feature type="binding site" evidence="1">
    <location>
        <position position="78"/>
    </location>
    <ligand>
        <name>Mg(2+)</name>
        <dbReference type="ChEBI" id="CHEBI:18420"/>
    </ligand>
</feature>
<feature type="binding site" evidence="1">
    <location>
        <begin position="96"/>
        <end position="99"/>
    </location>
    <ligand>
        <name>GTP</name>
        <dbReference type="ChEBI" id="CHEBI:37565"/>
    </ligand>
</feature>
<feature type="binding site" evidence="1">
    <location>
        <begin position="164"/>
        <end position="167"/>
    </location>
    <ligand>
        <name>GTP</name>
        <dbReference type="ChEBI" id="CHEBI:37565"/>
    </ligand>
</feature>
<feature type="binding site" evidence="1">
    <location>
        <begin position="197"/>
        <end position="200"/>
    </location>
    <ligand>
        <name>GTP</name>
        <dbReference type="ChEBI" id="CHEBI:37565"/>
    </ligand>
</feature>
<sequence length="220" mass="23747">MDAAAAPEFTEEALEAGRLLFAGKAEFVMGVVSLSGLPPADRSEVCFAGRSNVGKSSLINALTGRAKLARSSAEPGRTRELNYFDIGDEGKLYLVDLPGFGYAKVSKTQTAAWTKLIKSYLRGRPSLRRVFLLVDARRGDLMDTDEEVMDLMDGAAVTYQVVLTKVDKVPKGEVEKIVVKIADKLKKRGAAHPVVRMTSAEKGFGIPELRAEIAALAMLG</sequence>
<evidence type="ECO:0000255" key="1">
    <source>
        <dbReference type="HAMAP-Rule" id="MF_00321"/>
    </source>
</evidence>
<keyword id="KW-0131">Cell cycle</keyword>
<keyword id="KW-0132">Cell division</keyword>
<keyword id="KW-0342">GTP-binding</keyword>
<keyword id="KW-0460">Magnesium</keyword>
<keyword id="KW-0479">Metal-binding</keyword>
<keyword id="KW-0547">Nucleotide-binding</keyword>
<keyword id="KW-1185">Reference proteome</keyword>
<keyword id="KW-0717">Septation</keyword>
<comment type="function">
    <text evidence="1">Necessary for normal cell division and for the maintenance of normal septation.</text>
</comment>
<comment type="cofactor">
    <cofactor evidence="1">
        <name>Mg(2+)</name>
        <dbReference type="ChEBI" id="CHEBI:18420"/>
    </cofactor>
</comment>
<comment type="similarity">
    <text evidence="1">Belongs to the TRAFAC class TrmE-Era-EngA-EngB-Septin-like GTPase superfamily. EngB GTPase family.</text>
</comment>
<organism>
    <name type="scientific">Hyphomonas neptunium (strain ATCC 15444)</name>
    <dbReference type="NCBI Taxonomy" id="228405"/>
    <lineage>
        <taxon>Bacteria</taxon>
        <taxon>Pseudomonadati</taxon>
        <taxon>Pseudomonadota</taxon>
        <taxon>Alphaproteobacteria</taxon>
        <taxon>Hyphomonadales</taxon>
        <taxon>Hyphomonadaceae</taxon>
        <taxon>Hyphomonas</taxon>
    </lineage>
</organism>
<reference key="1">
    <citation type="journal article" date="2006" name="J. Bacteriol.">
        <title>Comparative genomic evidence for a close relationship between the dimorphic prosthecate bacteria Hyphomonas neptunium and Caulobacter crescentus.</title>
        <authorList>
            <person name="Badger J.H."/>
            <person name="Hoover T.R."/>
            <person name="Brun Y.V."/>
            <person name="Weiner R.M."/>
            <person name="Laub M.T."/>
            <person name="Alexandre G."/>
            <person name="Mrazek J."/>
            <person name="Ren Q."/>
            <person name="Paulsen I.T."/>
            <person name="Nelson K.E."/>
            <person name="Khouri H.M."/>
            <person name="Radune D."/>
            <person name="Sosa J."/>
            <person name="Dodson R.J."/>
            <person name="Sullivan S.A."/>
            <person name="Rosovitz M.J."/>
            <person name="Madupu R."/>
            <person name="Brinkac L.M."/>
            <person name="Durkin A.S."/>
            <person name="Daugherty S.C."/>
            <person name="Kothari S.P."/>
            <person name="Giglio M.G."/>
            <person name="Zhou L."/>
            <person name="Haft D.H."/>
            <person name="Selengut J.D."/>
            <person name="Davidsen T.M."/>
            <person name="Yang Q."/>
            <person name="Zafar N."/>
            <person name="Ward N.L."/>
        </authorList>
    </citation>
    <scope>NUCLEOTIDE SEQUENCE [LARGE SCALE GENOMIC DNA]</scope>
    <source>
        <strain>ATCC 15444</strain>
    </source>
</reference>
<gene>
    <name evidence="1" type="primary">engB</name>
    <name type="ordered locus">HNE_0415</name>
</gene>
<dbReference type="EMBL" id="CP000158">
    <property type="protein sequence ID" value="ABI75581.1"/>
    <property type="molecule type" value="Genomic_DNA"/>
</dbReference>
<dbReference type="SMR" id="Q0C548"/>
<dbReference type="STRING" id="228405.HNE_0415"/>
<dbReference type="KEGG" id="hne:HNE_0415"/>
<dbReference type="eggNOG" id="COG0218">
    <property type="taxonomic scope" value="Bacteria"/>
</dbReference>
<dbReference type="HOGENOM" id="CLU_033732_2_0_5"/>
<dbReference type="Proteomes" id="UP000001959">
    <property type="component" value="Chromosome"/>
</dbReference>
<dbReference type="GO" id="GO:0005525">
    <property type="term" value="F:GTP binding"/>
    <property type="evidence" value="ECO:0007669"/>
    <property type="project" value="UniProtKB-UniRule"/>
</dbReference>
<dbReference type="GO" id="GO:0046872">
    <property type="term" value="F:metal ion binding"/>
    <property type="evidence" value="ECO:0007669"/>
    <property type="project" value="UniProtKB-KW"/>
</dbReference>
<dbReference type="GO" id="GO:0000917">
    <property type="term" value="P:division septum assembly"/>
    <property type="evidence" value="ECO:0007669"/>
    <property type="project" value="UniProtKB-KW"/>
</dbReference>
<dbReference type="CDD" id="cd01876">
    <property type="entry name" value="YihA_EngB"/>
    <property type="match status" value="1"/>
</dbReference>
<dbReference type="Gene3D" id="3.40.50.300">
    <property type="entry name" value="P-loop containing nucleotide triphosphate hydrolases"/>
    <property type="match status" value="1"/>
</dbReference>
<dbReference type="HAMAP" id="MF_00321">
    <property type="entry name" value="GTPase_EngB"/>
    <property type="match status" value="1"/>
</dbReference>
<dbReference type="InterPro" id="IPR030393">
    <property type="entry name" value="G_ENGB_dom"/>
</dbReference>
<dbReference type="InterPro" id="IPR006073">
    <property type="entry name" value="GTP-bd"/>
</dbReference>
<dbReference type="InterPro" id="IPR019987">
    <property type="entry name" value="GTP-bd_ribosome_bio_YsxC"/>
</dbReference>
<dbReference type="InterPro" id="IPR027417">
    <property type="entry name" value="P-loop_NTPase"/>
</dbReference>
<dbReference type="NCBIfam" id="TIGR03598">
    <property type="entry name" value="GTPase_YsxC"/>
    <property type="match status" value="1"/>
</dbReference>
<dbReference type="PANTHER" id="PTHR11649:SF13">
    <property type="entry name" value="ENGB-TYPE G DOMAIN-CONTAINING PROTEIN"/>
    <property type="match status" value="1"/>
</dbReference>
<dbReference type="PANTHER" id="PTHR11649">
    <property type="entry name" value="MSS1/TRME-RELATED GTP-BINDING PROTEIN"/>
    <property type="match status" value="1"/>
</dbReference>
<dbReference type="Pfam" id="PF01926">
    <property type="entry name" value="MMR_HSR1"/>
    <property type="match status" value="1"/>
</dbReference>
<dbReference type="SUPFAM" id="SSF52540">
    <property type="entry name" value="P-loop containing nucleoside triphosphate hydrolases"/>
    <property type="match status" value="1"/>
</dbReference>
<dbReference type="PROSITE" id="PS51706">
    <property type="entry name" value="G_ENGB"/>
    <property type="match status" value="1"/>
</dbReference>
<protein>
    <recommendedName>
        <fullName evidence="1">Probable GTP-binding protein EngB</fullName>
    </recommendedName>
</protein>